<evidence type="ECO:0000255" key="1">
    <source>
        <dbReference type="HAMAP-Rule" id="MF_01249"/>
    </source>
</evidence>
<gene>
    <name evidence="1" type="primary">hprK</name>
    <name type="ordered locus">LBL_1669</name>
</gene>
<proteinExistence type="inferred from homology"/>
<feature type="chain" id="PRO_1000067158" description="HPr kinase/phosphorylase">
    <location>
        <begin position="1"/>
        <end position="318"/>
    </location>
</feature>
<feature type="region of interest" description="Important for the catalytic mechanism of both phosphorylation and dephosphorylation" evidence="1">
    <location>
        <begin position="206"/>
        <end position="215"/>
    </location>
</feature>
<feature type="region of interest" description="Important for the catalytic mechanism of dephosphorylation" evidence="1">
    <location>
        <begin position="269"/>
        <end position="274"/>
    </location>
</feature>
<feature type="active site" evidence="1">
    <location>
        <position position="143"/>
    </location>
</feature>
<feature type="active site" evidence="1">
    <location>
        <position position="164"/>
    </location>
</feature>
<feature type="active site" description="Proton acceptor; for phosphorylation activity. Proton donor; for dephosphorylation activity" evidence="1">
    <location>
        <position position="182"/>
    </location>
</feature>
<feature type="active site" evidence="1">
    <location>
        <position position="248"/>
    </location>
</feature>
<feature type="binding site" evidence="1">
    <location>
        <begin position="158"/>
        <end position="165"/>
    </location>
    <ligand>
        <name>ATP</name>
        <dbReference type="ChEBI" id="CHEBI:30616"/>
    </ligand>
</feature>
<feature type="binding site" evidence="1">
    <location>
        <position position="165"/>
    </location>
    <ligand>
        <name>Mg(2+)</name>
        <dbReference type="ChEBI" id="CHEBI:18420"/>
    </ligand>
</feature>
<feature type="binding site" evidence="1">
    <location>
        <position position="207"/>
    </location>
    <ligand>
        <name>Mg(2+)</name>
        <dbReference type="ChEBI" id="CHEBI:18420"/>
    </ligand>
</feature>
<protein>
    <recommendedName>
        <fullName evidence="1">HPr kinase/phosphorylase</fullName>
        <shortName evidence="1">HPrK/P</shortName>
        <ecNumber evidence="1">2.7.11.-</ecNumber>
        <ecNumber evidence="1">2.7.4.-</ecNumber>
    </recommendedName>
    <alternativeName>
        <fullName evidence="1">HPr(Ser) kinase/phosphorylase</fullName>
    </alternativeName>
</protein>
<name>HPRK_LEPBL</name>
<dbReference type="EC" id="2.7.11.-" evidence="1"/>
<dbReference type="EC" id="2.7.4.-" evidence="1"/>
<dbReference type="EMBL" id="CP000348">
    <property type="protein sequence ID" value="ABJ79119.1"/>
    <property type="molecule type" value="Genomic_DNA"/>
</dbReference>
<dbReference type="RefSeq" id="WP_011670263.1">
    <property type="nucleotide sequence ID" value="NC_008508.1"/>
</dbReference>
<dbReference type="SMR" id="Q050X6"/>
<dbReference type="KEGG" id="lbl:LBL_1669"/>
<dbReference type="HOGENOM" id="CLU_052030_0_1_12"/>
<dbReference type="GO" id="GO:0005524">
    <property type="term" value="F:ATP binding"/>
    <property type="evidence" value="ECO:0007669"/>
    <property type="project" value="UniProtKB-UniRule"/>
</dbReference>
<dbReference type="GO" id="GO:0000287">
    <property type="term" value="F:magnesium ion binding"/>
    <property type="evidence" value="ECO:0007669"/>
    <property type="project" value="UniProtKB-UniRule"/>
</dbReference>
<dbReference type="GO" id="GO:0000155">
    <property type="term" value="F:phosphorelay sensor kinase activity"/>
    <property type="evidence" value="ECO:0007669"/>
    <property type="project" value="InterPro"/>
</dbReference>
<dbReference type="GO" id="GO:0004674">
    <property type="term" value="F:protein serine/threonine kinase activity"/>
    <property type="evidence" value="ECO:0007669"/>
    <property type="project" value="UniProtKB-KW"/>
</dbReference>
<dbReference type="GO" id="GO:0004712">
    <property type="term" value="F:protein serine/threonine/tyrosine kinase activity"/>
    <property type="evidence" value="ECO:0007669"/>
    <property type="project" value="UniProtKB-UniRule"/>
</dbReference>
<dbReference type="GO" id="GO:0006109">
    <property type="term" value="P:regulation of carbohydrate metabolic process"/>
    <property type="evidence" value="ECO:0007669"/>
    <property type="project" value="UniProtKB-UniRule"/>
</dbReference>
<dbReference type="CDD" id="cd01918">
    <property type="entry name" value="HprK_C"/>
    <property type="match status" value="1"/>
</dbReference>
<dbReference type="FunFam" id="3.40.50.300:FF:000174">
    <property type="entry name" value="HPr kinase/phosphorylase"/>
    <property type="match status" value="1"/>
</dbReference>
<dbReference type="Gene3D" id="3.40.1390.20">
    <property type="entry name" value="HprK N-terminal domain-like"/>
    <property type="match status" value="1"/>
</dbReference>
<dbReference type="Gene3D" id="3.40.50.300">
    <property type="entry name" value="P-loop containing nucleotide triphosphate hydrolases"/>
    <property type="match status" value="1"/>
</dbReference>
<dbReference type="HAMAP" id="MF_01249">
    <property type="entry name" value="HPr_kinase"/>
    <property type="match status" value="1"/>
</dbReference>
<dbReference type="InterPro" id="IPR003755">
    <property type="entry name" value="HPr(Ser)_kin/Pase"/>
</dbReference>
<dbReference type="InterPro" id="IPR011104">
    <property type="entry name" value="Hpr_kin/Pase_C"/>
</dbReference>
<dbReference type="InterPro" id="IPR011126">
    <property type="entry name" value="Hpr_kin/Pase_Hpr_N"/>
</dbReference>
<dbReference type="InterPro" id="IPR027417">
    <property type="entry name" value="P-loop_NTPase"/>
</dbReference>
<dbReference type="InterPro" id="IPR028979">
    <property type="entry name" value="Ser_kin/Pase_Hpr-like_N_sf"/>
</dbReference>
<dbReference type="NCBIfam" id="TIGR00679">
    <property type="entry name" value="hpr-ser"/>
    <property type="match status" value="1"/>
</dbReference>
<dbReference type="PANTHER" id="PTHR30305:SF1">
    <property type="entry name" value="HPR KINASE_PHOSPHORYLASE"/>
    <property type="match status" value="1"/>
</dbReference>
<dbReference type="PANTHER" id="PTHR30305">
    <property type="entry name" value="PROTEIN YJDM-RELATED"/>
    <property type="match status" value="1"/>
</dbReference>
<dbReference type="Pfam" id="PF07475">
    <property type="entry name" value="Hpr_kinase_C"/>
    <property type="match status" value="1"/>
</dbReference>
<dbReference type="Pfam" id="PF02603">
    <property type="entry name" value="Hpr_kinase_N"/>
    <property type="match status" value="1"/>
</dbReference>
<dbReference type="SUPFAM" id="SSF75138">
    <property type="entry name" value="HprK N-terminal domain-like"/>
    <property type="match status" value="1"/>
</dbReference>
<dbReference type="SUPFAM" id="SSF53795">
    <property type="entry name" value="PEP carboxykinase-like"/>
    <property type="match status" value="1"/>
</dbReference>
<comment type="function">
    <text evidence="1">Catalyzes the ATP- as well as the pyrophosphate-dependent phosphorylation of a specific serine residue in HPr, a phosphocarrier protein of the phosphoenolpyruvate-dependent sugar phosphotransferase system (PTS). HprK/P also catalyzes the pyrophosphate-producing, inorganic phosphate-dependent dephosphorylation (phosphorolysis) of seryl-phosphorylated HPr (P-Ser-HPr).</text>
</comment>
<comment type="catalytic activity">
    <reaction evidence="1">
        <text>[HPr protein]-L-serine + ATP = [HPr protein]-O-phospho-L-serine + ADP + H(+)</text>
        <dbReference type="Rhea" id="RHEA:46600"/>
        <dbReference type="Rhea" id="RHEA-COMP:11602"/>
        <dbReference type="Rhea" id="RHEA-COMP:11603"/>
        <dbReference type="ChEBI" id="CHEBI:15378"/>
        <dbReference type="ChEBI" id="CHEBI:29999"/>
        <dbReference type="ChEBI" id="CHEBI:30616"/>
        <dbReference type="ChEBI" id="CHEBI:83421"/>
        <dbReference type="ChEBI" id="CHEBI:456216"/>
    </reaction>
</comment>
<comment type="catalytic activity">
    <reaction evidence="1">
        <text>[HPr protein]-O-phospho-L-serine + phosphate + H(+) = [HPr protein]-L-serine + diphosphate</text>
        <dbReference type="Rhea" id="RHEA:46604"/>
        <dbReference type="Rhea" id="RHEA-COMP:11602"/>
        <dbReference type="Rhea" id="RHEA-COMP:11603"/>
        <dbReference type="ChEBI" id="CHEBI:15378"/>
        <dbReference type="ChEBI" id="CHEBI:29999"/>
        <dbReference type="ChEBI" id="CHEBI:33019"/>
        <dbReference type="ChEBI" id="CHEBI:43474"/>
        <dbReference type="ChEBI" id="CHEBI:83421"/>
    </reaction>
</comment>
<comment type="cofactor">
    <cofactor evidence="1">
        <name>Mg(2+)</name>
        <dbReference type="ChEBI" id="CHEBI:18420"/>
    </cofactor>
</comment>
<comment type="subunit">
    <text evidence="1">Homohexamer.</text>
</comment>
<comment type="domain">
    <text evidence="1">The Walker A ATP-binding motif also binds Pi and PPi.</text>
</comment>
<comment type="miscellaneous">
    <text evidence="1">Both phosphorylation and phosphorolysis are carried out by the same active site and suggest a common mechanism for both reactions.</text>
</comment>
<comment type="similarity">
    <text evidence="1">Belongs to the HPrK/P family.</text>
</comment>
<keyword id="KW-0067">ATP-binding</keyword>
<keyword id="KW-0418">Kinase</keyword>
<keyword id="KW-0460">Magnesium</keyword>
<keyword id="KW-0479">Metal-binding</keyword>
<keyword id="KW-0511">Multifunctional enzyme</keyword>
<keyword id="KW-0547">Nucleotide-binding</keyword>
<keyword id="KW-0723">Serine/threonine-protein kinase</keyword>
<keyword id="KW-0808">Transferase</keyword>
<sequence>MSMPGINVSNLLNEHEELGLRLLAGEKGLTNRINMSEINRPGLSLTGFYESFAHDRIQIFGKGEWAYITSRIPEDLKNIAADFFSFHLNCIIFTHGNMPPSIFTENCERLAIPLMISDVSTHKFITLISGILDRSLAPRTMRHGVLIEVFGIGILLSGKSGVGKSETALELIERGHRLVADDMVEIRRLSESYLIGTCSDLLRHHMEIRGLGILNIKDIFGIGSVRDHKLIELIIRLEEWTEDKDFDRTGLENPTEELLGVQIPLIRVPVKPGRNIPIIVETAAMNQRLRKLGKNAAQEFNQKLSNYLQQGKVERNPP</sequence>
<organism>
    <name type="scientific">Leptospira borgpetersenii serovar Hardjo-bovis (strain L550)</name>
    <dbReference type="NCBI Taxonomy" id="355276"/>
    <lineage>
        <taxon>Bacteria</taxon>
        <taxon>Pseudomonadati</taxon>
        <taxon>Spirochaetota</taxon>
        <taxon>Spirochaetia</taxon>
        <taxon>Leptospirales</taxon>
        <taxon>Leptospiraceae</taxon>
        <taxon>Leptospira</taxon>
    </lineage>
</organism>
<reference key="1">
    <citation type="journal article" date="2006" name="Proc. Natl. Acad. Sci. U.S.A.">
        <title>Genome reduction in Leptospira borgpetersenii reflects limited transmission potential.</title>
        <authorList>
            <person name="Bulach D.M."/>
            <person name="Zuerner R.L."/>
            <person name="Wilson P."/>
            <person name="Seemann T."/>
            <person name="McGrath A."/>
            <person name="Cullen P.A."/>
            <person name="Davis J."/>
            <person name="Johnson M."/>
            <person name="Kuczek E."/>
            <person name="Alt D.P."/>
            <person name="Peterson-Burch B."/>
            <person name="Coppel R.L."/>
            <person name="Rood J.I."/>
            <person name="Davies J.K."/>
            <person name="Adler B."/>
        </authorList>
    </citation>
    <scope>NUCLEOTIDE SEQUENCE [LARGE SCALE GENOMIC DNA]</scope>
    <source>
        <strain>L550</strain>
    </source>
</reference>
<accession>Q050X6</accession>